<comment type="function">
    <text evidence="1">GTPase that plays an essential role in the late steps of ribosome biogenesis.</text>
</comment>
<comment type="subunit">
    <text evidence="1">Associates with the 50S ribosomal subunit.</text>
</comment>
<comment type="similarity">
    <text evidence="1">Belongs to the TRAFAC class TrmE-Era-EngA-EngB-Septin-like GTPase superfamily. EngA (Der) GTPase family.</text>
</comment>
<organism>
    <name type="scientific">Prochlorococcus marinus (strain MIT 9215)</name>
    <dbReference type="NCBI Taxonomy" id="93060"/>
    <lineage>
        <taxon>Bacteria</taxon>
        <taxon>Bacillati</taxon>
        <taxon>Cyanobacteriota</taxon>
        <taxon>Cyanophyceae</taxon>
        <taxon>Synechococcales</taxon>
        <taxon>Prochlorococcaceae</taxon>
        <taxon>Prochlorococcus</taxon>
    </lineage>
</organism>
<gene>
    <name evidence="1" type="primary">der</name>
    <name type="synonym">engA</name>
    <name type="ordered locus">P9215_04681</name>
</gene>
<proteinExistence type="inferred from homology"/>
<reference key="1">
    <citation type="journal article" date="2007" name="PLoS Genet.">
        <title>Patterns and implications of gene gain and loss in the evolution of Prochlorococcus.</title>
        <authorList>
            <person name="Kettler G.C."/>
            <person name="Martiny A.C."/>
            <person name="Huang K."/>
            <person name="Zucker J."/>
            <person name="Coleman M.L."/>
            <person name="Rodrigue S."/>
            <person name="Chen F."/>
            <person name="Lapidus A."/>
            <person name="Ferriera S."/>
            <person name="Johnson J."/>
            <person name="Steglich C."/>
            <person name="Church G.M."/>
            <person name="Richardson P."/>
            <person name="Chisholm S.W."/>
        </authorList>
    </citation>
    <scope>NUCLEOTIDE SEQUENCE [LARGE SCALE GENOMIC DNA]</scope>
    <source>
        <strain>MIT 9215</strain>
    </source>
</reference>
<dbReference type="EMBL" id="CP000825">
    <property type="protein sequence ID" value="ABV50084.1"/>
    <property type="molecule type" value="Genomic_DNA"/>
</dbReference>
<dbReference type="RefSeq" id="WP_012007226.1">
    <property type="nucleotide sequence ID" value="NC_009840.1"/>
</dbReference>
<dbReference type="SMR" id="A8G3A3"/>
<dbReference type="STRING" id="93060.P9215_04681"/>
<dbReference type="KEGG" id="pmh:P9215_04681"/>
<dbReference type="eggNOG" id="COG1160">
    <property type="taxonomic scope" value="Bacteria"/>
</dbReference>
<dbReference type="HOGENOM" id="CLU_016077_6_2_3"/>
<dbReference type="OrthoDB" id="9805918at2"/>
<dbReference type="Proteomes" id="UP000002014">
    <property type="component" value="Chromosome"/>
</dbReference>
<dbReference type="GO" id="GO:0005525">
    <property type="term" value="F:GTP binding"/>
    <property type="evidence" value="ECO:0007669"/>
    <property type="project" value="UniProtKB-UniRule"/>
</dbReference>
<dbReference type="GO" id="GO:0043022">
    <property type="term" value="F:ribosome binding"/>
    <property type="evidence" value="ECO:0007669"/>
    <property type="project" value="TreeGrafter"/>
</dbReference>
<dbReference type="GO" id="GO:0042254">
    <property type="term" value="P:ribosome biogenesis"/>
    <property type="evidence" value="ECO:0007669"/>
    <property type="project" value="UniProtKB-KW"/>
</dbReference>
<dbReference type="CDD" id="cd01894">
    <property type="entry name" value="EngA1"/>
    <property type="match status" value="1"/>
</dbReference>
<dbReference type="CDD" id="cd01895">
    <property type="entry name" value="EngA2"/>
    <property type="match status" value="1"/>
</dbReference>
<dbReference type="FunFam" id="3.30.300.20:FF:000004">
    <property type="entry name" value="GTPase Der"/>
    <property type="match status" value="1"/>
</dbReference>
<dbReference type="FunFam" id="3.40.50.300:FF:000040">
    <property type="entry name" value="GTPase Der"/>
    <property type="match status" value="1"/>
</dbReference>
<dbReference type="Gene3D" id="3.30.300.20">
    <property type="match status" value="1"/>
</dbReference>
<dbReference type="Gene3D" id="3.40.50.300">
    <property type="entry name" value="P-loop containing nucleotide triphosphate hydrolases"/>
    <property type="match status" value="2"/>
</dbReference>
<dbReference type="HAMAP" id="MF_00195">
    <property type="entry name" value="GTPase_Der"/>
    <property type="match status" value="1"/>
</dbReference>
<dbReference type="InterPro" id="IPR031166">
    <property type="entry name" value="G_ENGA"/>
</dbReference>
<dbReference type="InterPro" id="IPR006073">
    <property type="entry name" value="GTP-bd"/>
</dbReference>
<dbReference type="InterPro" id="IPR016484">
    <property type="entry name" value="GTPase_Der"/>
</dbReference>
<dbReference type="InterPro" id="IPR032859">
    <property type="entry name" value="KH_dom-like"/>
</dbReference>
<dbReference type="InterPro" id="IPR015946">
    <property type="entry name" value="KH_dom-like_a/b"/>
</dbReference>
<dbReference type="InterPro" id="IPR027417">
    <property type="entry name" value="P-loop_NTPase"/>
</dbReference>
<dbReference type="InterPro" id="IPR005225">
    <property type="entry name" value="Small_GTP-bd"/>
</dbReference>
<dbReference type="NCBIfam" id="TIGR03594">
    <property type="entry name" value="GTPase_EngA"/>
    <property type="match status" value="1"/>
</dbReference>
<dbReference type="NCBIfam" id="TIGR00231">
    <property type="entry name" value="small_GTP"/>
    <property type="match status" value="2"/>
</dbReference>
<dbReference type="PANTHER" id="PTHR43834">
    <property type="entry name" value="GTPASE DER"/>
    <property type="match status" value="1"/>
</dbReference>
<dbReference type="PANTHER" id="PTHR43834:SF6">
    <property type="entry name" value="GTPASE DER"/>
    <property type="match status" value="1"/>
</dbReference>
<dbReference type="Pfam" id="PF14714">
    <property type="entry name" value="KH_dom-like"/>
    <property type="match status" value="1"/>
</dbReference>
<dbReference type="Pfam" id="PF01926">
    <property type="entry name" value="MMR_HSR1"/>
    <property type="match status" value="2"/>
</dbReference>
<dbReference type="PIRSF" id="PIRSF006485">
    <property type="entry name" value="GTP-binding_EngA"/>
    <property type="match status" value="1"/>
</dbReference>
<dbReference type="PRINTS" id="PR00326">
    <property type="entry name" value="GTP1OBG"/>
</dbReference>
<dbReference type="SUPFAM" id="SSF52540">
    <property type="entry name" value="P-loop containing nucleoside triphosphate hydrolases"/>
    <property type="match status" value="2"/>
</dbReference>
<dbReference type="PROSITE" id="PS51712">
    <property type="entry name" value="G_ENGA"/>
    <property type="match status" value="2"/>
</dbReference>
<sequence length="457" mass="51153">MILPTIAIIGRPNVGKSTLVNRLCQSNDAIVFDKPGVTRDRTYQNASWGGKEFQIVDTGGLVFDDDSEFLPEIRTQVFLALEEASLALLVVDGNQGVTDGDLSIAKWLRNSSCKTIVAVNKCESTTLGISLASEFWKLGLGEPNPVSAIHGSGTGDLLDLVIGELPENNIRDDEEKIMMSIIGRPNVGKSSLLNSICGEKRAIVSDISGTTTDSIDTLIKKGDNYWKIIDTAGIRRKKNVKYGTEFFGINRAFKSIDRSDVCVLVIDAVDGVTDQDQKLAGRIEEQGRACIIVVNKWDLVEKNSSTIYQVEKELRSKLYFLHWSKMIFISALTGQRVDNIFEHALNAVNQHRRRVTTSVVNEVLKESISWKSPPTKRSGKQGRLYYGTQVKNKPPTFTLFVNDPKLFGITYRRYIEKQIRLNLGFEGTPLILLWRGKQQRALNKEVERENIEVIQKD</sequence>
<protein>
    <recommendedName>
        <fullName evidence="1">GTPase Der</fullName>
    </recommendedName>
    <alternativeName>
        <fullName evidence="1">GTP-binding protein EngA</fullName>
    </alternativeName>
</protein>
<evidence type="ECO:0000255" key="1">
    <source>
        <dbReference type="HAMAP-Rule" id="MF_00195"/>
    </source>
</evidence>
<keyword id="KW-0342">GTP-binding</keyword>
<keyword id="KW-0547">Nucleotide-binding</keyword>
<keyword id="KW-0677">Repeat</keyword>
<keyword id="KW-0690">Ribosome biogenesis</keyword>
<name>DER_PROM2</name>
<feature type="chain" id="PRO_1000058526" description="GTPase Der">
    <location>
        <begin position="1"/>
        <end position="457"/>
    </location>
</feature>
<feature type="domain" description="EngA-type G 1">
    <location>
        <begin position="4"/>
        <end position="169"/>
    </location>
</feature>
<feature type="domain" description="EngA-type G 2">
    <location>
        <begin position="177"/>
        <end position="352"/>
    </location>
</feature>
<feature type="domain" description="KH-like" evidence="1">
    <location>
        <begin position="353"/>
        <end position="438"/>
    </location>
</feature>
<feature type="binding site" evidence="1">
    <location>
        <begin position="10"/>
        <end position="17"/>
    </location>
    <ligand>
        <name>GTP</name>
        <dbReference type="ChEBI" id="CHEBI:37565"/>
        <label>1</label>
    </ligand>
</feature>
<feature type="binding site" evidence="1">
    <location>
        <begin position="57"/>
        <end position="61"/>
    </location>
    <ligand>
        <name>GTP</name>
        <dbReference type="ChEBI" id="CHEBI:37565"/>
        <label>1</label>
    </ligand>
</feature>
<feature type="binding site" evidence="1">
    <location>
        <begin position="120"/>
        <end position="123"/>
    </location>
    <ligand>
        <name>GTP</name>
        <dbReference type="ChEBI" id="CHEBI:37565"/>
        <label>1</label>
    </ligand>
</feature>
<feature type="binding site" evidence="1">
    <location>
        <begin position="183"/>
        <end position="190"/>
    </location>
    <ligand>
        <name>GTP</name>
        <dbReference type="ChEBI" id="CHEBI:37565"/>
        <label>2</label>
    </ligand>
</feature>
<feature type="binding site" evidence="1">
    <location>
        <begin position="230"/>
        <end position="234"/>
    </location>
    <ligand>
        <name>GTP</name>
        <dbReference type="ChEBI" id="CHEBI:37565"/>
        <label>2</label>
    </ligand>
</feature>
<feature type="binding site" evidence="1">
    <location>
        <begin position="295"/>
        <end position="298"/>
    </location>
    <ligand>
        <name>GTP</name>
        <dbReference type="ChEBI" id="CHEBI:37565"/>
        <label>2</label>
    </ligand>
</feature>
<accession>A8G3A3</accession>